<sequence length="197" mass="20850">MQAGVIAVQGDVAEHAAAVENAAAAHGEPAEVVEVRDAGIVPDCDVLLMPGGESTTISRLIRREGIDEEIREHVASGKPVLATCAGLIVCSRDAKDDRVDALGLVNVSVDRNAFGRQKDSFEAKIPMTGLDEPFHAVFIRAPLIDDVGEGVEVLATVDGRPVAVRDGPVVATAFHPELTDDSRIHDLAFFPEQEVVA</sequence>
<gene>
    <name evidence="1" type="primary">pdxT</name>
    <name type="ordered locus">Hlac_0370</name>
</gene>
<protein>
    <recommendedName>
        <fullName evidence="1">Pyridoxal 5'-phosphate synthase subunit PdxT</fullName>
        <ecNumber evidence="1">4.3.3.6</ecNumber>
    </recommendedName>
    <alternativeName>
        <fullName evidence="1">Pdx2</fullName>
    </alternativeName>
    <alternativeName>
        <fullName evidence="1">Pyridoxal 5'-phosphate synthase glutaminase subunit</fullName>
        <ecNumber evidence="1">3.5.1.2</ecNumber>
    </alternativeName>
</protein>
<organism>
    <name type="scientific">Halorubrum lacusprofundi (strain ATCC 49239 / DSM 5036 / JCM 8891 / ACAM 34)</name>
    <dbReference type="NCBI Taxonomy" id="416348"/>
    <lineage>
        <taxon>Archaea</taxon>
        <taxon>Methanobacteriati</taxon>
        <taxon>Methanobacteriota</taxon>
        <taxon>Stenosarchaea group</taxon>
        <taxon>Halobacteria</taxon>
        <taxon>Halobacteriales</taxon>
        <taxon>Haloferacaceae</taxon>
        <taxon>Halorubrum</taxon>
    </lineage>
</organism>
<feature type="chain" id="PRO_1000185890" description="Pyridoxal 5'-phosphate synthase subunit PdxT">
    <location>
        <begin position="1"/>
        <end position="197"/>
    </location>
</feature>
<feature type="active site" description="Nucleophile" evidence="1">
    <location>
        <position position="84"/>
    </location>
</feature>
<feature type="active site" description="Charge relay system" evidence="1">
    <location>
        <position position="175"/>
    </location>
</feature>
<feature type="active site" description="Charge relay system" evidence="1">
    <location>
        <position position="177"/>
    </location>
</feature>
<feature type="binding site" evidence="1">
    <location>
        <begin position="52"/>
        <end position="54"/>
    </location>
    <ligand>
        <name>L-glutamine</name>
        <dbReference type="ChEBI" id="CHEBI:58359"/>
    </ligand>
</feature>
<feature type="binding site" evidence="1">
    <location>
        <position position="111"/>
    </location>
    <ligand>
        <name>L-glutamine</name>
        <dbReference type="ChEBI" id="CHEBI:58359"/>
    </ligand>
</feature>
<feature type="binding site" evidence="1">
    <location>
        <begin position="139"/>
        <end position="140"/>
    </location>
    <ligand>
        <name>L-glutamine</name>
        <dbReference type="ChEBI" id="CHEBI:58359"/>
    </ligand>
</feature>
<name>PDXT_HALLT</name>
<evidence type="ECO:0000255" key="1">
    <source>
        <dbReference type="HAMAP-Rule" id="MF_01615"/>
    </source>
</evidence>
<keyword id="KW-0315">Glutamine amidotransferase</keyword>
<keyword id="KW-0378">Hydrolase</keyword>
<keyword id="KW-0456">Lyase</keyword>
<keyword id="KW-0663">Pyridoxal phosphate</keyword>
<keyword id="KW-1185">Reference proteome</keyword>
<proteinExistence type="inferred from homology"/>
<reference key="1">
    <citation type="journal article" date="2016" name="Stand. Genomic Sci.">
        <title>Complete genome sequence of the Antarctic Halorubrum lacusprofundi type strain ACAM 34.</title>
        <authorList>
            <person name="Anderson I.J."/>
            <person name="DasSarma P."/>
            <person name="Lucas S."/>
            <person name="Copeland A."/>
            <person name="Lapidus A."/>
            <person name="Del Rio T.G."/>
            <person name="Tice H."/>
            <person name="Dalin E."/>
            <person name="Bruce D.C."/>
            <person name="Goodwin L."/>
            <person name="Pitluck S."/>
            <person name="Sims D."/>
            <person name="Brettin T.S."/>
            <person name="Detter J.C."/>
            <person name="Han C.S."/>
            <person name="Larimer F."/>
            <person name="Hauser L."/>
            <person name="Land M."/>
            <person name="Ivanova N."/>
            <person name="Richardson P."/>
            <person name="Cavicchioli R."/>
            <person name="DasSarma S."/>
            <person name="Woese C.R."/>
            <person name="Kyrpides N.C."/>
        </authorList>
    </citation>
    <scope>NUCLEOTIDE SEQUENCE [LARGE SCALE GENOMIC DNA]</scope>
    <source>
        <strain>ATCC 49239 / DSM 5036 / JCM 8891 / ACAM 34</strain>
    </source>
</reference>
<comment type="function">
    <text evidence="1">Catalyzes the hydrolysis of glutamine to glutamate and ammonia as part of the biosynthesis of pyridoxal 5'-phosphate. The resulting ammonia molecule is channeled to the active site of PdxS.</text>
</comment>
<comment type="catalytic activity">
    <reaction evidence="1">
        <text>aldehydo-D-ribose 5-phosphate + D-glyceraldehyde 3-phosphate + L-glutamine = pyridoxal 5'-phosphate + L-glutamate + phosphate + 3 H2O + H(+)</text>
        <dbReference type="Rhea" id="RHEA:31507"/>
        <dbReference type="ChEBI" id="CHEBI:15377"/>
        <dbReference type="ChEBI" id="CHEBI:15378"/>
        <dbReference type="ChEBI" id="CHEBI:29985"/>
        <dbReference type="ChEBI" id="CHEBI:43474"/>
        <dbReference type="ChEBI" id="CHEBI:58273"/>
        <dbReference type="ChEBI" id="CHEBI:58359"/>
        <dbReference type="ChEBI" id="CHEBI:59776"/>
        <dbReference type="ChEBI" id="CHEBI:597326"/>
        <dbReference type="EC" id="4.3.3.6"/>
    </reaction>
</comment>
<comment type="catalytic activity">
    <reaction evidence="1">
        <text>L-glutamine + H2O = L-glutamate + NH4(+)</text>
        <dbReference type="Rhea" id="RHEA:15889"/>
        <dbReference type="ChEBI" id="CHEBI:15377"/>
        <dbReference type="ChEBI" id="CHEBI:28938"/>
        <dbReference type="ChEBI" id="CHEBI:29985"/>
        <dbReference type="ChEBI" id="CHEBI:58359"/>
        <dbReference type="EC" id="3.5.1.2"/>
    </reaction>
</comment>
<comment type="pathway">
    <text evidence="1">Cofactor biosynthesis; pyridoxal 5'-phosphate biosynthesis.</text>
</comment>
<comment type="subunit">
    <text evidence="1">In the presence of PdxS, forms a dodecamer of heterodimers. Only shows activity in the heterodimer.</text>
</comment>
<comment type="similarity">
    <text evidence="1">Belongs to the glutaminase PdxT/SNO family.</text>
</comment>
<accession>B9LSC8</accession>
<dbReference type="EC" id="4.3.3.6" evidence="1"/>
<dbReference type="EC" id="3.5.1.2" evidence="1"/>
<dbReference type="EMBL" id="CP001365">
    <property type="protein sequence ID" value="ACM55973.1"/>
    <property type="molecule type" value="Genomic_DNA"/>
</dbReference>
<dbReference type="RefSeq" id="WP_012659614.1">
    <property type="nucleotide sequence ID" value="NC_012029.1"/>
</dbReference>
<dbReference type="SMR" id="B9LSC8"/>
<dbReference type="MEROPS" id="C26.A32"/>
<dbReference type="GeneID" id="7399763"/>
<dbReference type="KEGG" id="hla:Hlac_0370"/>
<dbReference type="eggNOG" id="arCOG00034">
    <property type="taxonomic scope" value="Archaea"/>
</dbReference>
<dbReference type="HOGENOM" id="CLU_069674_2_0_2"/>
<dbReference type="UniPathway" id="UPA00245"/>
<dbReference type="Proteomes" id="UP000000740">
    <property type="component" value="Chromosome 1"/>
</dbReference>
<dbReference type="GO" id="GO:0005829">
    <property type="term" value="C:cytosol"/>
    <property type="evidence" value="ECO:0007669"/>
    <property type="project" value="TreeGrafter"/>
</dbReference>
<dbReference type="GO" id="GO:1903600">
    <property type="term" value="C:glutaminase complex"/>
    <property type="evidence" value="ECO:0007669"/>
    <property type="project" value="TreeGrafter"/>
</dbReference>
<dbReference type="GO" id="GO:0004359">
    <property type="term" value="F:glutaminase activity"/>
    <property type="evidence" value="ECO:0007669"/>
    <property type="project" value="UniProtKB-UniRule"/>
</dbReference>
<dbReference type="GO" id="GO:0036381">
    <property type="term" value="F:pyridoxal 5'-phosphate synthase (glutamine hydrolysing) activity"/>
    <property type="evidence" value="ECO:0007669"/>
    <property type="project" value="UniProtKB-UniRule"/>
</dbReference>
<dbReference type="GO" id="GO:0006543">
    <property type="term" value="P:glutamine catabolic process"/>
    <property type="evidence" value="ECO:0007669"/>
    <property type="project" value="UniProtKB-UniRule"/>
</dbReference>
<dbReference type="GO" id="GO:0042823">
    <property type="term" value="P:pyridoxal phosphate biosynthetic process"/>
    <property type="evidence" value="ECO:0007669"/>
    <property type="project" value="UniProtKB-UniRule"/>
</dbReference>
<dbReference type="GO" id="GO:0008614">
    <property type="term" value="P:pyridoxine metabolic process"/>
    <property type="evidence" value="ECO:0007669"/>
    <property type="project" value="TreeGrafter"/>
</dbReference>
<dbReference type="CDD" id="cd01749">
    <property type="entry name" value="GATase1_PB"/>
    <property type="match status" value="1"/>
</dbReference>
<dbReference type="FunFam" id="3.40.50.880:FF:000010">
    <property type="entry name" value="uncharacterized protein LOC100176842 isoform X2"/>
    <property type="match status" value="1"/>
</dbReference>
<dbReference type="Gene3D" id="3.40.50.880">
    <property type="match status" value="1"/>
</dbReference>
<dbReference type="HAMAP" id="MF_01615">
    <property type="entry name" value="PdxT"/>
    <property type="match status" value="1"/>
</dbReference>
<dbReference type="InterPro" id="IPR029062">
    <property type="entry name" value="Class_I_gatase-like"/>
</dbReference>
<dbReference type="InterPro" id="IPR002161">
    <property type="entry name" value="PdxT/SNO"/>
</dbReference>
<dbReference type="NCBIfam" id="TIGR03800">
    <property type="entry name" value="PLP_synth_Pdx2"/>
    <property type="match status" value="1"/>
</dbReference>
<dbReference type="PANTHER" id="PTHR31559">
    <property type="entry name" value="PYRIDOXAL 5'-PHOSPHATE SYNTHASE SUBUNIT SNO"/>
    <property type="match status" value="1"/>
</dbReference>
<dbReference type="PANTHER" id="PTHR31559:SF0">
    <property type="entry name" value="PYRIDOXAL 5'-PHOSPHATE SYNTHASE SUBUNIT SNO1-RELATED"/>
    <property type="match status" value="1"/>
</dbReference>
<dbReference type="Pfam" id="PF01174">
    <property type="entry name" value="SNO"/>
    <property type="match status" value="1"/>
</dbReference>
<dbReference type="PIRSF" id="PIRSF005639">
    <property type="entry name" value="Glut_amidoT_SNO"/>
    <property type="match status" value="1"/>
</dbReference>
<dbReference type="SUPFAM" id="SSF52317">
    <property type="entry name" value="Class I glutamine amidotransferase-like"/>
    <property type="match status" value="1"/>
</dbReference>
<dbReference type="PROSITE" id="PS51130">
    <property type="entry name" value="PDXT_SNO_2"/>
    <property type="match status" value="1"/>
</dbReference>